<proteinExistence type="evidence at protein level"/>
<protein>
    <recommendedName>
        <fullName>Proline-rich protein 3</fullName>
    </recommendedName>
    <alternativeName>
        <fullName>Uncharacterized shell protein 25</fullName>
        <shortName>LUSP-25</shortName>
    </alternativeName>
</protein>
<comment type="subcellular location">
    <subcellularLocation>
        <location evidence="2">Secreted</location>
    </subcellularLocation>
</comment>
<comment type="tissue specificity">
    <text evidence="2">Component of the acid-insoluble organic matrix of calcified layers of the shell (at protein level).</text>
</comment>
<evidence type="ECO:0000255" key="1"/>
<evidence type="ECO:0000269" key="2">
    <source>
    </source>
</evidence>
<evidence type="ECO:0000269" key="3">
    <source ref="1"/>
</evidence>
<evidence type="ECO:0000305" key="4"/>
<sequence>MKMNFFNSFPQYGVYILGLNLLLCGVSEGFIGFGMDGFEEMFPLLMLGGMNGGQSNYVRPKPIAPTLPPTPPPPMVKPPSITWRWVPNTRYTWPLFNNMQWPQYNPYVLPLANNAMAKTGSAFNTNTISGTKASSGNAMPVLPAPNAQMISSGGPVPPAAGLMNGMGMGLAGSNMAAANQMTWNTQTTSKGSTPM</sequence>
<keyword id="KW-0903">Direct protein sequencing</keyword>
<keyword id="KW-0964">Secreted</keyword>
<keyword id="KW-0732">Signal</keyword>
<dbReference type="EMBL" id="FC756322">
    <property type="status" value="NOT_ANNOTATED_CDS"/>
    <property type="molecule type" value="mRNA"/>
</dbReference>
<dbReference type="GO" id="GO:0005576">
    <property type="term" value="C:extracellular region"/>
    <property type="evidence" value="ECO:0007669"/>
    <property type="project" value="UniProtKB-SubCell"/>
</dbReference>
<accession>B3A0S4</accession>
<organism>
    <name type="scientific">Lottia gigantea</name>
    <name type="common">Giant owl limpet</name>
    <dbReference type="NCBI Taxonomy" id="225164"/>
    <lineage>
        <taxon>Eukaryota</taxon>
        <taxon>Metazoa</taxon>
        <taxon>Spiralia</taxon>
        <taxon>Lophotrochozoa</taxon>
        <taxon>Mollusca</taxon>
        <taxon>Gastropoda</taxon>
        <taxon>Patellogastropoda</taxon>
        <taxon>Lottioidea</taxon>
        <taxon>Lottiidae</taxon>
        <taxon>Lottia</taxon>
    </lineage>
</organism>
<name>PRP3_LOTGI</name>
<reference evidence="4" key="1">
    <citation type="submission" date="2007-12" db="EMBL/GenBank/DDBJ databases">
        <title>DOE Joint Genome Institute Lottia gigantea EST project.</title>
        <authorList>
            <person name="Richardson P."/>
            <person name="Lucas S."/>
            <person name="Rokhsar D."/>
            <person name="Wang M."/>
            <person name="Lindquist E.A."/>
        </authorList>
    </citation>
    <scope>NUCLEOTIDE SEQUENCE [LARGE SCALE MRNA]</scope>
    <scope>IDENTIFICATION</scope>
    <source>
        <tissue evidence="3">Larva</tissue>
    </source>
</reference>
<reference key="2">
    <citation type="journal article" date="2013" name="FEBS J.">
        <title>The shell-forming proteome of Lottia gigantea reveals both deep conservations and lineage-specific novelties.</title>
        <authorList>
            <person name="Marie B."/>
            <person name="Jackson D.J."/>
            <person name="Ramos-Silva P."/>
            <person name="Zanella-Cleon I."/>
            <person name="Guichard N."/>
            <person name="Marin F."/>
        </authorList>
    </citation>
    <scope>PROTEIN SEQUENCE OF 119-132</scope>
    <scope>SUBCELLULAR LOCATION</scope>
    <scope>TISSUE SPECIFICITY</scope>
    <source>
        <tissue>Shell</tissue>
    </source>
</reference>
<feature type="signal peptide" evidence="1">
    <location>
        <begin position="1"/>
        <end position="29"/>
    </location>
</feature>
<feature type="chain" id="PRO_0000415241" description="Proline-rich protein 3" evidence="1">
    <location>
        <begin position="30"/>
        <end position="195"/>
    </location>
</feature>